<protein>
    <recommendedName>
        <fullName evidence="1">DNA gyrase inhibitor</fullName>
    </recommendedName>
</protein>
<reference key="1">
    <citation type="journal article" date="2008" name="PLoS Genet.">
        <title>Complete genome sequence of the N2-fixing broad host range endophyte Klebsiella pneumoniae 342 and virulence predictions verified in mice.</title>
        <authorList>
            <person name="Fouts D.E."/>
            <person name="Tyler H.L."/>
            <person name="DeBoy R.T."/>
            <person name="Daugherty S."/>
            <person name="Ren Q."/>
            <person name="Badger J.H."/>
            <person name="Durkin A.S."/>
            <person name="Huot H."/>
            <person name="Shrivastava S."/>
            <person name="Kothari S."/>
            <person name="Dodson R.J."/>
            <person name="Mohamoud Y."/>
            <person name="Khouri H."/>
            <person name="Roesch L.F.W."/>
            <person name="Krogfelt K.A."/>
            <person name="Struve C."/>
            <person name="Triplett E.W."/>
            <person name="Methe B.A."/>
        </authorList>
    </citation>
    <scope>NUCLEOTIDE SEQUENCE [LARGE SCALE GENOMIC DNA]</scope>
    <source>
        <strain>342</strain>
    </source>
</reference>
<accession>B5XPH8</accession>
<comment type="function">
    <text evidence="1">Inhibits the supercoiling activity of DNA gyrase. Acts by inhibiting DNA gyrase at an early step, prior to (or at the step of) binding of DNA by the gyrase. It protects cells against toxins that target DNA gyrase, by inhibiting activity of these toxins and reducing the formation of lethal double-strand breaks in the cell.</text>
</comment>
<comment type="subunit">
    <text evidence="1">Interacts with DNA gyrase.</text>
</comment>
<comment type="subcellular location">
    <subcellularLocation>
        <location evidence="1">Cytoplasm</location>
    </subcellularLocation>
</comment>
<comment type="similarity">
    <text evidence="1">Belongs to the DNA gyrase inhibitor family.</text>
</comment>
<dbReference type="EMBL" id="CP000964">
    <property type="protein sequence ID" value="ACI07477.1"/>
    <property type="molecule type" value="Genomic_DNA"/>
</dbReference>
<dbReference type="SMR" id="B5XPH8"/>
<dbReference type="KEGG" id="kpe:KPK_1720"/>
<dbReference type="HOGENOM" id="CLU_113664_3_2_6"/>
<dbReference type="Proteomes" id="UP000001734">
    <property type="component" value="Chromosome"/>
</dbReference>
<dbReference type="GO" id="GO:0005737">
    <property type="term" value="C:cytoplasm"/>
    <property type="evidence" value="ECO:0007669"/>
    <property type="project" value="UniProtKB-SubCell"/>
</dbReference>
<dbReference type="GO" id="GO:0008657">
    <property type="term" value="F:DNA topoisomerase type II (double strand cut, ATP-hydrolyzing) inhibitor activity"/>
    <property type="evidence" value="ECO:0007669"/>
    <property type="project" value="UniProtKB-UniRule"/>
</dbReference>
<dbReference type="Gene3D" id="3.20.80.10">
    <property type="entry name" value="Regulatory factor, effector binding domain"/>
    <property type="match status" value="1"/>
</dbReference>
<dbReference type="HAMAP" id="MF_01896">
    <property type="entry name" value="DNA_gyrase_inhibitor"/>
    <property type="match status" value="1"/>
</dbReference>
<dbReference type="InterPro" id="IPR010499">
    <property type="entry name" value="AraC_E-bd"/>
</dbReference>
<dbReference type="InterPro" id="IPR050908">
    <property type="entry name" value="DNA_gyrase_inhibitor"/>
</dbReference>
<dbReference type="InterPro" id="IPR024911">
    <property type="entry name" value="DNA_gyrase_inhibitor_GyrI"/>
</dbReference>
<dbReference type="InterPro" id="IPR029442">
    <property type="entry name" value="GyrI-like"/>
</dbReference>
<dbReference type="InterPro" id="IPR011256">
    <property type="entry name" value="Reg_factor_effector_dom_sf"/>
</dbReference>
<dbReference type="NCBIfam" id="NF007451">
    <property type="entry name" value="PRK10016.1"/>
    <property type="match status" value="1"/>
</dbReference>
<dbReference type="PANTHER" id="PTHR40055:SF2">
    <property type="entry name" value="DNA GYRASE INHIBITOR"/>
    <property type="match status" value="1"/>
</dbReference>
<dbReference type="PANTHER" id="PTHR40055">
    <property type="entry name" value="TRANSCRIPTIONAL REGULATOR YGIV-RELATED"/>
    <property type="match status" value="1"/>
</dbReference>
<dbReference type="Pfam" id="PF06445">
    <property type="entry name" value="GyrI-like"/>
    <property type="match status" value="1"/>
</dbReference>
<dbReference type="SMART" id="SM00871">
    <property type="entry name" value="AraC_E_bind"/>
    <property type="match status" value="1"/>
</dbReference>
<dbReference type="SUPFAM" id="SSF55136">
    <property type="entry name" value="Probable bacterial effector-binding domain"/>
    <property type="match status" value="1"/>
</dbReference>
<organism>
    <name type="scientific">Klebsiella pneumoniae (strain 342)</name>
    <dbReference type="NCBI Taxonomy" id="507522"/>
    <lineage>
        <taxon>Bacteria</taxon>
        <taxon>Pseudomonadati</taxon>
        <taxon>Pseudomonadota</taxon>
        <taxon>Gammaproteobacteria</taxon>
        <taxon>Enterobacterales</taxon>
        <taxon>Enterobacteriaceae</taxon>
        <taxon>Klebsiella/Raoultella group</taxon>
        <taxon>Klebsiella</taxon>
        <taxon>Klebsiella pneumoniae complex</taxon>
    </lineage>
</organism>
<keyword id="KW-0963">Cytoplasm</keyword>
<keyword id="KW-0346">Stress response</keyword>
<evidence type="ECO:0000255" key="1">
    <source>
        <dbReference type="HAMAP-Rule" id="MF_01896"/>
    </source>
</evidence>
<sequence>MNYSITTLGKKTIAGFHLVGPWDQTVKQGVEQLMMWVENHQVPAREWLAVYYDNPEEVPAEKLRCATVVAVDEDYVIPANSEGVILAAVAGGDYACARARVVDYDFATPWMQFFDSLLQSTTYRVAPRPCFEIYLNDGNHDGYWDIDMYVPVERVAS</sequence>
<feature type="chain" id="PRO_0000409702" description="DNA gyrase inhibitor">
    <location>
        <begin position="1"/>
        <end position="157"/>
    </location>
</feature>
<gene>
    <name evidence="1" type="primary">sbmC</name>
    <name type="synonym">gyrI</name>
    <name type="ordered locus">KPK_1720</name>
</gene>
<name>SBMC_KLEP3</name>
<proteinExistence type="inferred from homology"/>